<comment type="function">
    <text evidence="1">Part of the ABC transporter complex ZnuABC involved in zinc import. Responsible for energy coupling to the transport system.</text>
</comment>
<comment type="catalytic activity">
    <reaction evidence="1">
        <text>Zn(2+)(out) + ATP(in) + H2O(in) = Zn(2+)(in) + ADP(in) + phosphate(in) + H(+)(in)</text>
        <dbReference type="Rhea" id="RHEA:29795"/>
        <dbReference type="ChEBI" id="CHEBI:15377"/>
        <dbReference type="ChEBI" id="CHEBI:15378"/>
        <dbReference type="ChEBI" id="CHEBI:29105"/>
        <dbReference type="ChEBI" id="CHEBI:30616"/>
        <dbReference type="ChEBI" id="CHEBI:43474"/>
        <dbReference type="ChEBI" id="CHEBI:456216"/>
        <dbReference type="EC" id="7.2.2.20"/>
    </reaction>
</comment>
<comment type="subunit">
    <text evidence="1">The complex is composed of two ATP-binding proteins (ZnuC), two transmembrane proteins (ZnuB) and a solute-binding protein (ZnuA).</text>
</comment>
<comment type="subcellular location">
    <subcellularLocation>
        <location evidence="1">Cell inner membrane</location>
        <topology evidence="1">Peripheral membrane protein</topology>
    </subcellularLocation>
</comment>
<comment type="similarity">
    <text evidence="1">Belongs to the ABC transporter superfamily. Zinc importer (TC 3.A.1.15.5) family.</text>
</comment>
<name>ZNUC2_HAHCH</name>
<keyword id="KW-0067">ATP-binding</keyword>
<keyword id="KW-0997">Cell inner membrane</keyword>
<keyword id="KW-1003">Cell membrane</keyword>
<keyword id="KW-0406">Ion transport</keyword>
<keyword id="KW-0472">Membrane</keyword>
<keyword id="KW-0547">Nucleotide-binding</keyword>
<keyword id="KW-1185">Reference proteome</keyword>
<keyword id="KW-1278">Translocase</keyword>
<keyword id="KW-0813">Transport</keyword>
<keyword id="KW-0862">Zinc</keyword>
<keyword id="KW-0864">Zinc transport</keyword>
<proteinExistence type="inferred from homology"/>
<gene>
    <name evidence="1" type="primary">znuC2</name>
    <name type="ordered locus">HCH_02940</name>
</gene>
<reference key="1">
    <citation type="journal article" date="2005" name="Nucleic Acids Res.">
        <title>Genomic blueprint of Hahella chejuensis, a marine microbe producing an algicidal agent.</title>
        <authorList>
            <person name="Jeong H."/>
            <person name="Yim J.H."/>
            <person name="Lee C."/>
            <person name="Choi S.-H."/>
            <person name="Park Y.K."/>
            <person name="Yoon S.H."/>
            <person name="Hur C.-G."/>
            <person name="Kang H.-Y."/>
            <person name="Kim D."/>
            <person name="Lee H.H."/>
            <person name="Park K.H."/>
            <person name="Park S.-H."/>
            <person name="Park H.-S."/>
            <person name="Lee H.K."/>
            <person name="Oh T.K."/>
            <person name="Kim J.F."/>
        </authorList>
    </citation>
    <scope>NUCLEOTIDE SEQUENCE [LARGE SCALE GENOMIC DNA]</scope>
    <source>
        <strain>KCTC 2396</strain>
    </source>
</reference>
<sequence>MLIGCASLTIQLGKRTILKDISMGVEPGEIVTIIGPNGSGKTTLLRAMIGAVAPRSGRLIRAPGLTLGYAPQTLHIDETLPMTVQRFMSLPKLGTASDIDAALSQAGVPGLEKQQIMSLSGGQLQRVLLARALLGRPRLLLLDEATQGLDPRGVADFYRQITSVRDELGCAIIMVSHELHLVMRKTDRVICLNGHICCEGEPDIVSRSPEYLALFGIDNDDEAAIALHSHGRGRSHHGSLSRAG</sequence>
<feature type="chain" id="PRO_0000281512" description="Zinc import ATP-binding protein ZnuC 2">
    <location>
        <begin position="1"/>
        <end position="244"/>
    </location>
</feature>
<feature type="domain" description="ABC transporter" evidence="1">
    <location>
        <begin position="3"/>
        <end position="218"/>
    </location>
</feature>
<feature type="binding site" evidence="1">
    <location>
        <begin position="35"/>
        <end position="42"/>
    </location>
    <ligand>
        <name>ATP</name>
        <dbReference type="ChEBI" id="CHEBI:30616"/>
    </ligand>
</feature>
<evidence type="ECO:0000255" key="1">
    <source>
        <dbReference type="HAMAP-Rule" id="MF_01725"/>
    </source>
</evidence>
<organism>
    <name type="scientific">Hahella chejuensis (strain KCTC 2396)</name>
    <dbReference type="NCBI Taxonomy" id="349521"/>
    <lineage>
        <taxon>Bacteria</taxon>
        <taxon>Pseudomonadati</taxon>
        <taxon>Pseudomonadota</taxon>
        <taxon>Gammaproteobacteria</taxon>
        <taxon>Oceanospirillales</taxon>
        <taxon>Hahellaceae</taxon>
        <taxon>Hahella</taxon>
    </lineage>
</organism>
<accession>Q2SI12</accession>
<protein>
    <recommendedName>
        <fullName evidence="1">Zinc import ATP-binding protein ZnuC 2</fullName>
        <ecNumber evidence="1">7.2.2.20</ecNumber>
    </recommendedName>
</protein>
<dbReference type="EC" id="7.2.2.20" evidence="1"/>
<dbReference type="EMBL" id="CP000155">
    <property type="protein sequence ID" value="ABC29712.1"/>
    <property type="molecule type" value="Genomic_DNA"/>
</dbReference>
<dbReference type="RefSeq" id="WP_011396781.1">
    <property type="nucleotide sequence ID" value="NC_007645.1"/>
</dbReference>
<dbReference type="SMR" id="Q2SI12"/>
<dbReference type="STRING" id="349521.HCH_02940"/>
<dbReference type="KEGG" id="hch:HCH_02940"/>
<dbReference type="eggNOG" id="COG1121">
    <property type="taxonomic scope" value="Bacteria"/>
</dbReference>
<dbReference type="HOGENOM" id="CLU_000604_1_11_6"/>
<dbReference type="OrthoDB" id="9780942at2"/>
<dbReference type="Proteomes" id="UP000000238">
    <property type="component" value="Chromosome"/>
</dbReference>
<dbReference type="GO" id="GO:0005886">
    <property type="term" value="C:plasma membrane"/>
    <property type="evidence" value="ECO:0007669"/>
    <property type="project" value="UniProtKB-SubCell"/>
</dbReference>
<dbReference type="GO" id="GO:0015633">
    <property type="term" value="F:ABC-type zinc transporter activity"/>
    <property type="evidence" value="ECO:0007669"/>
    <property type="project" value="UniProtKB-EC"/>
</dbReference>
<dbReference type="GO" id="GO:0005524">
    <property type="term" value="F:ATP binding"/>
    <property type="evidence" value="ECO:0007669"/>
    <property type="project" value="UniProtKB-KW"/>
</dbReference>
<dbReference type="GO" id="GO:0016887">
    <property type="term" value="F:ATP hydrolysis activity"/>
    <property type="evidence" value="ECO:0007669"/>
    <property type="project" value="InterPro"/>
</dbReference>
<dbReference type="GO" id="GO:0010043">
    <property type="term" value="P:response to zinc ion"/>
    <property type="evidence" value="ECO:0007669"/>
    <property type="project" value="TreeGrafter"/>
</dbReference>
<dbReference type="Gene3D" id="3.40.50.300">
    <property type="entry name" value="P-loop containing nucleotide triphosphate hydrolases"/>
    <property type="match status" value="1"/>
</dbReference>
<dbReference type="InterPro" id="IPR003593">
    <property type="entry name" value="AAA+_ATPase"/>
</dbReference>
<dbReference type="InterPro" id="IPR003439">
    <property type="entry name" value="ABC_transporter-like_ATP-bd"/>
</dbReference>
<dbReference type="InterPro" id="IPR017871">
    <property type="entry name" value="ABC_transporter-like_CS"/>
</dbReference>
<dbReference type="InterPro" id="IPR050153">
    <property type="entry name" value="Metal_Ion_Import_ABC"/>
</dbReference>
<dbReference type="InterPro" id="IPR027417">
    <property type="entry name" value="P-loop_NTPase"/>
</dbReference>
<dbReference type="PANTHER" id="PTHR42734">
    <property type="entry name" value="METAL TRANSPORT SYSTEM ATP-BINDING PROTEIN TM_0124-RELATED"/>
    <property type="match status" value="1"/>
</dbReference>
<dbReference type="PANTHER" id="PTHR42734:SF9">
    <property type="entry name" value="ZINC IMPORT ATP-BINDING PROTEIN ZNUC"/>
    <property type="match status" value="1"/>
</dbReference>
<dbReference type="Pfam" id="PF00005">
    <property type="entry name" value="ABC_tran"/>
    <property type="match status" value="1"/>
</dbReference>
<dbReference type="SMART" id="SM00382">
    <property type="entry name" value="AAA"/>
    <property type="match status" value="1"/>
</dbReference>
<dbReference type="SUPFAM" id="SSF52540">
    <property type="entry name" value="P-loop containing nucleoside triphosphate hydrolases"/>
    <property type="match status" value="1"/>
</dbReference>
<dbReference type="PROSITE" id="PS00211">
    <property type="entry name" value="ABC_TRANSPORTER_1"/>
    <property type="match status" value="1"/>
</dbReference>
<dbReference type="PROSITE" id="PS50893">
    <property type="entry name" value="ABC_TRANSPORTER_2"/>
    <property type="match status" value="1"/>
</dbReference>
<dbReference type="PROSITE" id="PS51298">
    <property type="entry name" value="ZNUC"/>
    <property type="match status" value="1"/>
</dbReference>